<keyword id="KW-0004">4Fe-4S</keyword>
<keyword id="KW-0028">Amino-acid biosynthesis</keyword>
<keyword id="KW-0100">Branched-chain amino acid biosynthesis</keyword>
<keyword id="KW-0408">Iron</keyword>
<keyword id="KW-0411">Iron-sulfur</keyword>
<keyword id="KW-0432">Leucine biosynthesis</keyword>
<keyword id="KW-0456">Lyase</keyword>
<keyword id="KW-0479">Metal-binding</keyword>
<keyword id="KW-1185">Reference proteome</keyword>
<name>LEUC_SYNR3</name>
<dbReference type="EC" id="4.2.1.33" evidence="1"/>
<dbReference type="EMBL" id="CT978603">
    <property type="protein sequence ID" value="CAK29234.1"/>
    <property type="molecule type" value="Genomic_DNA"/>
</dbReference>
<dbReference type="SMR" id="A5GWH5"/>
<dbReference type="STRING" id="316278.SynRCC307_2331"/>
<dbReference type="KEGG" id="syr:SynRCC307_2331"/>
<dbReference type="eggNOG" id="COG0065">
    <property type="taxonomic scope" value="Bacteria"/>
</dbReference>
<dbReference type="HOGENOM" id="CLU_006714_3_4_3"/>
<dbReference type="OrthoDB" id="9802769at2"/>
<dbReference type="UniPathway" id="UPA00048">
    <property type="reaction ID" value="UER00071"/>
</dbReference>
<dbReference type="Proteomes" id="UP000001115">
    <property type="component" value="Chromosome"/>
</dbReference>
<dbReference type="GO" id="GO:0003861">
    <property type="term" value="F:3-isopropylmalate dehydratase activity"/>
    <property type="evidence" value="ECO:0007669"/>
    <property type="project" value="UniProtKB-UniRule"/>
</dbReference>
<dbReference type="GO" id="GO:0051539">
    <property type="term" value="F:4 iron, 4 sulfur cluster binding"/>
    <property type="evidence" value="ECO:0007669"/>
    <property type="project" value="UniProtKB-KW"/>
</dbReference>
<dbReference type="GO" id="GO:0046872">
    <property type="term" value="F:metal ion binding"/>
    <property type="evidence" value="ECO:0007669"/>
    <property type="project" value="UniProtKB-KW"/>
</dbReference>
<dbReference type="GO" id="GO:0009098">
    <property type="term" value="P:L-leucine biosynthetic process"/>
    <property type="evidence" value="ECO:0007669"/>
    <property type="project" value="UniProtKB-UniRule"/>
</dbReference>
<dbReference type="CDD" id="cd01583">
    <property type="entry name" value="IPMI"/>
    <property type="match status" value="1"/>
</dbReference>
<dbReference type="Gene3D" id="3.30.499.10">
    <property type="entry name" value="Aconitase, domain 3"/>
    <property type="match status" value="2"/>
</dbReference>
<dbReference type="HAMAP" id="MF_01026">
    <property type="entry name" value="LeuC_type1"/>
    <property type="match status" value="1"/>
</dbReference>
<dbReference type="InterPro" id="IPR004430">
    <property type="entry name" value="3-IsopropMal_deHydase_lsu"/>
</dbReference>
<dbReference type="InterPro" id="IPR015931">
    <property type="entry name" value="Acnase/IPM_dHydase_lsu_aba_1/3"/>
</dbReference>
<dbReference type="InterPro" id="IPR001030">
    <property type="entry name" value="Acoase/IPM_deHydtase_lsu_aba"/>
</dbReference>
<dbReference type="InterPro" id="IPR018136">
    <property type="entry name" value="Aconitase_4Fe-4S_BS"/>
</dbReference>
<dbReference type="InterPro" id="IPR036008">
    <property type="entry name" value="Aconitase_4Fe-4S_dom"/>
</dbReference>
<dbReference type="InterPro" id="IPR050067">
    <property type="entry name" value="IPM_dehydratase_rel_enz"/>
</dbReference>
<dbReference type="InterPro" id="IPR033941">
    <property type="entry name" value="IPMI_cat"/>
</dbReference>
<dbReference type="NCBIfam" id="TIGR00170">
    <property type="entry name" value="leuC"/>
    <property type="match status" value="1"/>
</dbReference>
<dbReference type="NCBIfam" id="NF004016">
    <property type="entry name" value="PRK05478.1"/>
    <property type="match status" value="1"/>
</dbReference>
<dbReference type="NCBIfam" id="NF009116">
    <property type="entry name" value="PRK12466.1"/>
    <property type="match status" value="1"/>
</dbReference>
<dbReference type="PANTHER" id="PTHR43822:SF9">
    <property type="entry name" value="3-ISOPROPYLMALATE DEHYDRATASE"/>
    <property type="match status" value="1"/>
</dbReference>
<dbReference type="PANTHER" id="PTHR43822">
    <property type="entry name" value="HOMOACONITASE, MITOCHONDRIAL-RELATED"/>
    <property type="match status" value="1"/>
</dbReference>
<dbReference type="Pfam" id="PF00330">
    <property type="entry name" value="Aconitase"/>
    <property type="match status" value="1"/>
</dbReference>
<dbReference type="PRINTS" id="PR00415">
    <property type="entry name" value="ACONITASE"/>
</dbReference>
<dbReference type="SUPFAM" id="SSF53732">
    <property type="entry name" value="Aconitase iron-sulfur domain"/>
    <property type="match status" value="1"/>
</dbReference>
<dbReference type="PROSITE" id="PS00450">
    <property type="entry name" value="ACONITASE_1"/>
    <property type="match status" value="1"/>
</dbReference>
<dbReference type="PROSITE" id="PS01244">
    <property type="entry name" value="ACONITASE_2"/>
    <property type="match status" value="1"/>
</dbReference>
<accession>A5GWH5</accession>
<comment type="function">
    <text evidence="1">Catalyzes the isomerization between 2-isopropylmalate and 3-isopropylmalate, via the formation of 2-isopropylmaleate.</text>
</comment>
<comment type="catalytic activity">
    <reaction evidence="1">
        <text>(2R,3S)-3-isopropylmalate = (2S)-2-isopropylmalate</text>
        <dbReference type="Rhea" id="RHEA:32287"/>
        <dbReference type="ChEBI" id="CHEBI:1178"/>
        <dbReference type="ChEBI" id="CHEBI:35121"/>
        <dbReference type="EC" id="4.2.1.33"/>
    </reaction>
</comment>
<comment type="cofactor">
    <cofactor evidence="1">
        <name>[4Fe-4S] cluster</name>
        <dbReference type="ChEBI" id="CHEBI:49883"/>
    </cofactor>
    <text evidence="1">Binds 1 [4Fe-4S] cluster per subunit.</text>
</comment>
<comment type="pathway">
    <text evidence="1">Amino-acid biosynthesis; L-leucine biosynthesis; L-leucine from 3-methyl-2-oxobutanoate: step 2/4.</text>
</comment>
<comment type="subunit">
    <text evidence="1">Heterodimer of LeuC and LeuD.</text>
</comment>
<comment type="similarity">
    <text evidence="1">Belongs to the aconitase/IPM isomerase family. LeuC type 1 subfamily.</text>
</comment>
<gene>
    <name evidence="1" type="primary">leuC</name>
    <name type="ordered locus">SynRCC307_2331</name>
</gene>
<sequence>MSTATLYDKVWALHQVAELPSGSTQLFIGLHLIHEVTSPQAFAALKDLGLSVRHPERTVATVDHIVPTTSQARPFADGLAEEMLSTLERNCHENGIHLNGLGSGRQGIVHVMAPELGLTQPGMTVACGDSHTSTHGAFGAIAFGIGTSQVRDVLASQSLTMNKLKVRRIWVDGALQPGVFAKDLVLHIIRTLGVKGGVGYAYEFAGPAIEALSMEERMTLCNMAIEGGARCGYVNPDQTTFDYLKGRPHAPSGDAWDHAVSWWKSLASGADACFDDEVKFDAAVIAPTITWGITPGQGIGVDEAVPTLEQTPEEDRPLAQEAYRYMDLQPGQAIAGLPVDVCFIGSCTNGRLSDLRAAAAVAAGRQVASGIKAFVVPGSEQVAAAAEAEGLDAVFRQAGFEWREPGCSMCLAMNPDRLEGRQISASSSNRNFKGRQGSASGRTLLMSPAMVAAAAIAGRVTDVRSLPPA</sequence>
<reference key="1">
    <citation type="submission" date="2006-05" db="EMBL/GenBank/DDBJ databases">
        <authorList>
            <consortium name="Genoscope"/>
        </authorList>
    </citation>
    <scope>NUCLEOTIDE SEQUENCE [LARGE SCALE GENOMIC DNA]</scope>
    <source>
        <strain>RCC307</strain>
    </source>
</reference>
<protein>
    <recommendedName>
        <fullName evidence="1">3-isopropylmalate dehydratase large subunit</fullName>
        <ecNumber evidence="1">4.2.1.33</ecNumber>
    </recommendedName>
    <alternativeName>
        <fullName evidence="1">Alpha-IPM isomerase</fullName>
        <shortName evidence="1">IPMI</shortName>
    </alternativeName>
    <alternativeName>
        <fullName evidence="1">Isopropylmalate isomerase</fullName>
    </alternativeName>
</protein>
<evidence type="ECO:0000255" key="1">
    <source>
        <dbReference type="HAMAP-Rule" id="MF_01026"/>
    </source>
</evidence>
<feature type="chain" id="PRO_1000063625" description="3-isopropylmalate dehydratase large subunit">
    <location>
        <begin position="1"/>
        <end position="469"/>
    </location>
</feature>
<feature type="binding site" evidence="1">
    <location>
        <position position="347"/>
    </location>
    <ligand>
        <name>[4Fe-4S] cluster</name>
        <dbReference type="ChEBI" id="CHEBI:49883"/>
    </ligand>
</feature>
<feature type="binding site" evidence="1">
    <location>
        <position position="407"/>
    </location>
    <ligand>
        <name>[4Fe-4S] cluster</name>
        <dbReference type="ChEBI" id="CHEBI:49883"/>
    </ligand>
</feature>
<feature type="binding site" evidence="1">
    <location>
        <position position="410"/>
    </location>
    <ligand>
        <name>[4Fe-4S] cluster</name>
        <dbReference type="ChEBI" id="CHEBI:49883"/>
    </ligand>
</feature>
<organism>
    <name type="scientific">Synechococcus sp. (strain RCC307)</name>
    <dbReference type="NCBI Taxonomy" id="316278"/>
    <lineage>
        <taxon>Bacteria</taxon>
        <taxon>Bacillati</taxon>
        <taxon>Cyanobacteriota</taxon>
        <taxon>Cyanophyceae</taxon>
        <taxon>Synechococcales</taxon>
        <taxon>Synechococcaceae</taxon>
        <taxon>Synechococcus</taxon>
    </lineage>
</organism>
<proteinExistence type="inferred from homology"/>